<proteinExistence type="inferred from homology"/>
<accession>B3R6F8</accession>
<comment type="similarity">
    <text evidence="1">Belongs to the bacterial ribosomal protein bL28 family.</text>
</comment>
<sequence>MARVCQVTGKAPMVGNNVSHANNKTKRRFLPNLQNRRFFVESENRWVSLRVSNAGLRLIDKKGIDSVLADLRARGEV</sequence>
<name>RL28_CUPTR</name>
<gene>
    <name evidence="1" type="primary">rpmB</name>
    <name type="ordered locus">RALTA_A2509</name>
</gene>
<protein>
    <recommendedName>
        <fullName evidence="1">Large ribosomal subunit protein bL28</fullName>
    </recommendedName>
    <alternativeName>
        <fullName evidence="2">50S ribosomal protein L28</fullName>
    </alternativeName>
</protein>
<organism>
    <name type="scientific">Cupriavidus taiwanensis (strain DSM 17343 / BCRC 17206 / CCUG 44338 / CIP 107171 / LMG 19424 / R1)</name>
    <name type="common">Ralstonia taiwanensis (strain LMG 19424)</name>
    <dbReference type="NCBI Taxonomy" id="977880"/>
    <lineage>
        <taxon>Bacteria</taxon>
        <taxon>Pseudomonadati</taxon>
        <taxon>Pseudomonadota</taxon>
        <taxon>Betaproteobacteria</taxon>
        <taxon>Burkholderiales</taxon>
        <taxon>Burkholderiaceae</taxon>
        <taxon>Cupriavidus</taxon>
    </lineage>
</organism>
<feature type="chain" id="PRO_1000121615" description="Large ribosomal subunit protein bL28">
    <location>
        <begin position="1"/>
        <end position="77"/>
    </location>
</feature>
<dbReference type="EMBL" id="CU633749">
    <property type="protein sequence ID" value="CAQ70440.1"/>
    <property type="molecule type" value="Genomic_DNA"/>
</dbReference>
<dbReference type="RefSeq" id="WP_006575661.1">
    <property type="nucleotide sequence ID" value="NC_010528.1"/>
</dbReference>
<dbReference type="SMR" id="B3R6F8"/>
<dbReference type="GeneID" id="70691035"/>
<dbReference type="KEGG" id="cti:RALTA_A2509"/>
<dbReference type="eggNOG" id="COG0227">
    <property type="taxonomic scope" value="Bacteria"/>
</dbReference>
<dbReference type="HOGENOM" id="CLU_064548_3_1_4"/>
<dbReference type="BioCyc" id="CTAI977880:RALTA_RS12195-MONOMER"/>
<dbReference type="Proteomes" id="UP000001692">
    <property type="component" value="Chromosome 1"/>
</dbReference>
<dbReference type="GO" id="GO:0022625">
    <property type="term" value="C:cytosolic large ribosomal subunit"/>
    <property type="evidence" value="ECO:0007669"/>
    <property type="project" value="TreeGrafter"/>
</dbReference>
<dbReference type="GO" id="GO:0003735">
    <property type="term" value="F:structural constituent of ribosome"/>
    <property type="evidence" value="ECO:0007669"/>
    <property type="project" value="InterPro"/>
</dbReference>
<dbReference type="GO" id="GO:0006412">
    <property type="term" value="P:translation"/>
    <property type="evidence" value="ECO:0007669"/>
    <property type="project" value="UniProtKB-UniRule"/>
</dbReference>
<dbReference type="FunFam" id="2.30.170.40:FF:000001">
    <property type="entry name" value="50S ribosomal protein L28"/>
    <property type="match status" value="1"/>
</dbReference>
<dbReference type="Gene3D" id="2.30.170.40">
    <property type="entry name" value="Ribosomal protein L28/L24"/>
    <property type="match status" value="1"/>
</dbReference>
<dbReference type="HAMAP" id="MF_00373">
    <property type="entry name" value="Ribosomal_bL28"/>
    <property type="match status" value="1"/>
</dbReference>
<dbReference type="InterPro" id="IPR026569">
    <property type="entry name" value="Ribosomal_bL28"/>
</dbReference>
<dbReference type="InterPro" id="IPR034704">
    <property type="entry name" value="Ribosomal_bL28/bL31-like_sf"/>
</dbReference>
<dbReference type="InterPro" id="IPR001383">
    <property type="entry name" value="Ribosomal_bL28_bact-type"/>
</dbReference>
<dbReference type="InterPro" id="IPR037147">
    <property type="entry name" value="Ribosomal_bL28_sf"/>
</dbReference>
<dbReference type="NCBIfam" id="TIGR00009">
    <property type="entry name" value="L28"/>
    <property type="match status" value="1"/>
</dbReference>
<dbReference type="PANTHER" id="PTHR13528">
    <property type="entry name" value="39S RIBOSOMAL PROTEIN L28, MITOCHONDRIAL"/>
    <property type="match status" value="1"/>
</dbReference>
<dbReference type="PANTHER" id="PTHR13528:SF2">
    <property type="entry name" value="LARGE RIBOSOMAL SUBUNIT PROTEIN BL28M"/>
    <property type="match status" value="1"/>
</dbReference>
<dbReference type="Pfam" id="PF00830">
    <property type="entry name" value="Ribosomal_L28"/>
    <property type="match status" value="1"/>
</dbReference>
<dbReference type="SUPFAM" id="SSF143800">
    <property type="entry name" value="L28p-like"/>
    <property type="match status" value="1"/>
</dbReference>
<evidence type="ECO:0000255" key="1">
    <source>
        <dbReference type="HAMAP-Rule" id="MF_00373"/>
    </source>
</evidence>
<evidence type="ECO:0000305" key="2"/>
<keyword id="KW-0687">Ribonucleoprotein</keyword>
<keyword id="KW-0689">Ribosomal protein</keyword>
<reference key="1">
    <citation type="journal article" date="2008" name="Genome Res.">
        <title>Genome sequence of the beta-rhizobium Cupriavidus taiwanensis and comparative genomics of rhizobia.</title>
        <authorList>
            <person name="Amadou C."/>
            <person name="Pascal G."/>
            <person name="Mangenot S."/>
            <person name="Glew M."/>
            <person name="Bontemps C."/>
            <person name="Capela D."/>
            <person name="Carrere S."/>
            <person name="Cruveiller S."/>
            <person name="Dossat C."/>
            <person name="Lajus A."/>
            <person name="Marchetti M."/>
            <person name="Poinsot V."/>
            <person name="Rouy Z."/>
            <person name="Servin B."/>
            <person name="Saad M."/>
            <person name="Schenowitz C."/>
            <person name="Barbe V."/>
            <person name="Batut J."/>
            <person name="Medigue C."/>
            <person name="Masson-Boivin C."/>
        </authorList>
    </citation>
    <scope>NUCLEOTIDE SEQUENCE [LARGE SCALE GENOMIC DNA]</scope>
    <source>
        <strain>DSM 17343 / BCRC 17206 / CCUG 44338 / CIP 107171 / LMG 19424 / R1</strain>
    </source>
</reference>